<gene>
    <name evidence="1" type="primary">moaC</name>
    <name type="ordered locus">BB1330</name>
</gene>
<comment type="function">
    <text evidence="1">Catalyzes the conversion of (8S)-3',8-cyclo-7,8-dihydroguanosine 5'-triphosphate to cyclic pyranopterin monophosphate (cPMP).</text>
</comment>
<comment type="catalytic activity">
    <reaction evidence="1">
        <text>(8S)-3',8-cyclo-7,8-dihydroguanosine 5'-triphosphate = cyclic pyranopterin phosphate + diphosphate</text>
        <dbReference type="Rhea" id="RHEA:49580"/>
        <dbReference type="ChEBI" id="CHEBI:33019"/>
        <dbReference type="ChEBI" id="CHEBI:59648"/>
        <dbReference type="ChEBI" id="CHEBI:131766"/>
        <dbReference type="EC" id="4.6.1.17"/>
    </reaction>
</comment>
<comment type="pathway">
    <text evidence="1">Cofactor biosynthesis; molybdopterin biosynthesis.</text>
</comment>
<comment type="subunit">
    <text evidence="1">Homohexamer; trimer of dimers.</text>
</comment>
<comment type="similarity">
    <text evidence="1">Belongs to the MoaC family.</text>
</comment>
<evidence type="ECO:0000255" key="1">
    <source>
        <dbReference type="HAMAP-Rule" id="MF_01224"/>
    </source>
</evidence>
<keyword id="KW-0456">Lyase</keyword>
<keyword id="KW-0501">Molybdenum cofactor biosynthesis</keyword>
<reference key="1">
    <citation type="journal article" date="2003" name="Nat. Genet.">
        <title>Comparative analysis of the genome sequences of Bordetella pertussis, Bordetella parapertussis and Bordetella bronchiseptica.</title>
        <authorList>
            <person name="Parkhill J."/>
            <person name="Sebaihia M."/>
            <person name="Preston A."/>
            <person name="Murphy L.D."/>
            <person name="Thomson N.R."/>
            <person name="Harris D.E."/>
            <person name="Holden M.T.G."/>
            <person name="Churcher C.M."/>
            <person name="Bentley S.D."/>
            <person name="Mungall K.L."/>
            <person name="Cerdeno-Tarraga A.-M."/>
            <person name="Temple L."/>
            <person name="James K.D."/>
            <person name="Harris B."/>
            <person name="Quail M.A."/>
            <person name="Achtman M."/>
            <person name="Atkin R."/>
            <person name="Baker S."/>
            <person name="Basham D."/>
            <person name="Bason N."/>
            <person name="Cherevach I."/>
            <person name="Chillingworth T."/>
            <person name="Collins M."/>
            <person name="Cronin A."/>
            <person name="Davis P."/>
            <person name="Doggett J."/>
            <person name="Feltwell T."/>
            <person name="Goble A."/>
            <person name="Hamlin N."/>
            <person name="Hauser H."/>
            <person name="Holroyd S."/>
            <person name="Jagels K."/>
            <person name="Leather S."/>
            <person name="Moule S."/>
            <person name="Norberczak H."/>
            <person name="O'Neil S."/>
            <person name="Ormond D."/>
            <person name="Price C."/>
            <person name="Rabbinowitsch E."/>
            <person name="Rutter S."/>
            <person name="Sanders M."/>
            <person name="Saunders D."/>
            <person name="Seeger K."/>
            <person name="Sharp S."/>
            <person name="Simmonds M."/>
            <person name="Skelton J."/>
            <person name="Squares R."/>
            <person name="Squares S."/>
            <person name="Stevens K."/>
            <person name="Unwin L."/>
            <person name="Whitehead S."/>
            <person name="Barrell B.G."/>
            <person name="Maskell D.J."/>
        </authorList>
    </citation>
    <scope>NUCLEOTIDE SEQUENCE [LARGE SCALE GENOMIC DNA]</scope>
    <source>
        <strain>ATCC BAA-588 / NCTC 13252 / RB50</strain>
    </source>
</reference>
<dbReference type="EC" id="4.6.1.17" evidence="1"/>
<dbReference type="EMBL" id="BX640441">
    <property type="protein sequence ID" value="CAE31828.1"/>
    <property type="molecule type" value="Genomic_DNA"/>
</dbReference>
<dbReference type="RefSeq" id="WP_003819741.1">
    <property type="nucleotide sequence ID" value="NC_002927.3"/>
</dbReference>
<dbReference type="SMR" id="Q7WMR0"/>
<dbReference type="GeneID" id="69602613"/>
<dbReference type="KEGG" id="bbr:BB1330"/>
<dbReference type="eggNOG" id="COG0315">
    <property type="taxonomic scope" value="Bacteria"/>
</dbReference>
<dbReference type="HOGENOM" id="CLU_074693_1_1_4"/>
<dbReference type="UniPathway" id="UPA00344"/>
<dbReference type="Proteomes" id="UP000001027">
    <property type="component" value="Chromosome"/>
</dbReference>
<dbReference type="GO" id="GO:0061799">
    <property type="term" value="F:cyclic pyranopterin monophosphate synthase activity"/>
    <property type="evidence" value="ECO:0007669"/>
    <property type="project" value="UniProtKB-UniRule"/>
</dbReference>
<dbReference type="GO" id="GO:0006777">
    <property type="term" value="P:Mo-molybdopterin cofactor biosynthetic process"/>
    <property type="evidence" value="ECO:0007669"/>
    <property type="project" value="UniProtKB-UniRule"/>
</dbReference>
<dbReference type="CDD" id="cd01420">
    <property type="entry name" value="MoaC_PE"/>
    <property type="match status" value="1"/>
</dbReference>
<dbReference type="Gene3D" id="3.30.70.640">
    <property type="entry name" value="Molybdopterin cofactor biosynthesis C (MoaC) domain"/>
    <property type="match status" value="1"/>
</dbReference>
<dbReference type="HAMAP" id="MF_01224_B">
    <property type="entry name" value="MoaC_B"/>
    <property type="match status" value="1"/>
</dbReference>
<dbReference type="InterPro" id="IPR023045">
    <property type="entry name" value="MoaC"/>
</dbReference>
<dbReference type="InterPro" id="IPR047594">
    <property type="entry name" value="MoaC_bact/euk"/>
</dbReference>
<dbReference type="InterPro" id="IPR036522">
    <property type="entry name" value="MoaC_sf"/>
</dbReference>
<dbReference type="InterPro" id="IPR050105">
    <property type="entry name" value="MoCo_biosynth_MoaA/MoaC"/>
</dbReference>
<dbReference type="InterPro" id="IPR002820">
    <property type="entry name" value="Mopterin_CF_biosynth-C_dom"/>
</dbReference>
<dbReference type="NCBIfam" id="TIGR00581">
    <property type="entry name" value="moaC"/>
    <property type="match status" value="1"/>
</dbReference>
<dbReference type="NCBIfam" id="NF006870">
    <property type="entry name" value="PRK09364.1"/>
    <property type="match status" value="1"/>
</dbReference>
<dbReference type="PANTHER" id="PTHR22960:SF29">
    <property type="entry name" value="CYCLIC PYRANOPTERIN MONOPHOSPHATE SYNTHASE"/>
    <property type="match status" value="1"/>
</dbReference>
<dbReference type="PANTHER" id="PTHR22960">
    <property type="entry name" value="MOLYBDOPTERIN COFACTOR SYNTHESIS PROTEIN A"/>
    <property type="match status" value="1"/>
</dbReference>
<dbReference type="Pfam" id="PF01967">
    <property type="entry name" value="MoaC"/>
    <property type="match status" value="1"/>
</dbReference>
<dbReference type="SUPFAM" id="SSF55040">
    <property type="entry name" value="Molybdenum cofactor biosynthesis protein C, MoaC"/>
    <property type="match status" value="1"/>
</dbReference>
<sequence length="161" mass="17349">MSTTPTLSHLDESGQIRMVDVGHKTDTDRVAIARGSVRMNATAYGLLTQPGQGKGEVLNTARVAAVLAAKRCAELIPLCHSLPLAFVGIDFELDEAAHSVHIRATCRTQYKTGVEMEAMTACSVAALTIYDMCKAADKGIVIEQIRLQYKAGGKSGEWRND</sequence>
<accession>Q7WMR0</accession>
<feature type="chain" id="PRO_1000073154" description="Cyclic pyranopterin monophosphate synthase">
    <location>
        <begin position="1"/>
        <end position="161"/>
    </location>
</feature>
<feature type="active site" evidence="1">
    <location>
        <position position="131"/>
    </location>
</feature>
<feature type="binding site" evidence="1">
    <location>
        <begin position="78"/>
        <end position="80"/>
    </location>
    <ligand>
        <name>substrate</name>
    </ligand>
</feature>
<feature type="binding site" evidence="1">
    <location>
        <begin position="116"/>
        <end position="117"/>
    </location>
    <ligand>
        <name>substrate</name>
    </ligand>
</feature>
<name>MOAC_BORBR</name>
<organism>
    <name type="scientific">Bordetella bronchiseptica (strain ATCC BAA-588 / NCTC 13252 / RB50)</name>
    <name type="common">Alcaligenes bronchisepticus</name>
    <dbReference type="NCBI Taxonomy" id="257310"/>
    <lineage>
        <taxon>Bacteria</taxon>
        <taxon>Pseudomonadati</taxon>
        <taxon>Pseudomonadota</taxon>
        <taxon>Betaproteobacteria</taxon>
        <taxon>Burkholderiales</taxon>
        <taxon>Alcaligenaceae</taxon>
        <taxon>Bordetella</taxon>
    </lineage>
</organism>
<proteinExistence type="inferred from homology"/>
<protein>
    <recommendedName>
        <fullName evidence="1">Cyclic pyranopterin monophosphate synthase</fullName>
        <ecNumber evidence="1">4.6.1.17</ecNumber>
    </recommendedName>
    <alternativeName>
        <fullName evidence="1">Molybdenum cofactor biosynthesis protein C</fullName>
    </alternativeName>
</protein>